<dbReference type="EC" id="7.1.1.-" evidence="1"/>
<dbReference type="EMBL" id="CP000819">
    <property type="protein sequence ID" value="ACT39860.1"/>
    <property type="molecule type" value="Genomic_DNA"/>
</dbReference>
<dbReference type="RefSeq" id="WP_000612644.1">
    <property type="nucleotide sequence ID" value="NC_012967.1"/>
</dbReference>
<dbReference type="SMR" id="C6ULT8"/>
<dbReference type="GeneID" id="93033872"/>
<dbReference type="KEGG" id="ebr:ECB_02204"/>
<dbReference type="HOGENOM" id="CLU_144724_0_1_6"/>
<dbReference type="BioCyc" id="ECOL413997:GCQD-2412-MONOMER"/>
<dbReference type="GO" id="GO:0030964">
    <property type="term" value="C:NADH dehydrogenase complex"/>
    <property type="evidence" value="ECO:0007669"/>
    <property type="project" value="TreeGrafter"/>
</dbReference>
<dbReference type="GO" id="GO:0005886">
    <property type="term" value="C:plasma membrane"/>
    <property type="evidence" value="ECO:0007669"/>
    <property type="project" value="UniProtKB-SubCell"/>
</dbReference>
<dbReference type="GO" id="GO:0050136">
    <property type="term" value="F:NADH:ubiquinone reductase (non-electrogenic) activity"/>
    <property type="evidence" value="ECO:0007669"/>
    <property type="project" value="UniProtKB-UniRule"/>
</dbReference>
<dbReference type="GO" id="GO:0048038">
    <property type="term" value="F:quinone binding"/>
    <property type="evidence" value="ECO:0007669"/>
    <property type="project" value="UniProtKB-KW"/>
</dbReference>
<dbReference type="GO" id="GO:0042773">
    <property type="term" value="P:ATP synthesis coupled electron transport"/>
    <property type="evidence" value="ECO:0007669"/>
    <property type="project" value="InterPro"/>
</dbReference>
<dbReference type="FunFam" id="1.10.287.3510:FF:000001">
    <property type="entry name" value="NADH-quinone oxidoreductase subunit K"/>
    <property type="match status" value="1"/>
</dbReference>
<dbReference type="Gene3D" id="1.10.287.3510">
    <property type="match status" value="1"/>
</dbReference>
<dbReference type="HAMAP" id="MF_01456">
    <property type="entry name" value="NDH1_NuoK"/>
    <property type="match status" value="1"/>
</dbReference>
<dbReference type="InterPro" id="IPR001133">
    <property type="entry name" value="NADH_UbQ_OxRdtase_chain4L/K"/>
</dbReference>
<dbReference type="InterPro" id="IPR039428">
    <property type="entry name" value="NUOK/Mnh_C1-like"/>
</dbReference>
<dbReference type="NCBIfam" id="NF004319">
    <property type="entry name" value="PRK05715.1-1"/>
    <property type="match status" value="1"/>
</dbReference>
<dbReference type="NCBIfam" id="NF004320">
    <property type="entry name" value="PRK05715.1-2"/>
    <property type="match status" value="1"/>
</dbReference>
<dbReference type="PANTHER" id="PTHR11434:SF16">
    <property type="entry name" value="NADH-UBIQUINONE OXIDOREDUCTASE CHAIN 4L"/>
    <property type="match status" value="1"/>
</dbReference>
<dbReference type="PANTHER" id="PTHR11434">
    <property type="entry name" value="NADH-UBIQUINONE OXIDOREDUCTASE SUBUNIT ND4L"/>
    <property type="match status" value="1"/>
</dbReference>
<dbReference type="Pfam" id="PF00420">
    <property type="entry name" value="Oxidored_q2"/>
    <property type="match status" value="1"/>
</dbReference>
<feature type="chain" id="PRO_0000390043" description="NADH-quinone oxidoreductase subunit K">
    <location>
        <begin position="1"/>
        <end position="100"/>
    </location>
</feature>
<feature type="transmembrane region" description="Helical" evidence="1">
    <location>
        <begin position="4"/>
        <end position="24"/>
    </location>
</feature>
<feature type="transmembrane region" description="Helical" evidence="1">
    <location>
        <begin position="28"/>
        <end position="48"/>
    </location>
</feature>
<feature type="transmembrane region" description="Helical" evidence="1">
    <location>
        <begin position="60"/>
        <end position="80"/>
    </location>
</feature>
<keyword id="KW-0997">Cell inner membrane</keyword>
<keyword id="KW-1003">Cell membrane</keyword>
<keyword id="KW-0472">Membrane</keyword>
<keyword id="KW-0520">NAD</keyword>
<keyword id="KW-0874">Quinone</keyword>
<keyword id="KW-1278">Translocase</keyword>
<keyword id="KW-0812">Transmembrane</keyword>
<keyword id="KW-1133">Transmembrane helix</keyword>
<keyword id="KW-0813">Transport</keyword>
<keyword id="KW-0830">Ubiquinone</keyword>
<reference key="1">
    <citation type="journal article" date="2009" name="J. Mol. Biol.">
        <title>Genome sequences of Escherichia coli B strains REL606 and BL21(DE3).</title>
        <authorList>
            <person name="Jeong H."/>
            <person name="Barbe V."/>
            <person name="Lee C.H."/>
            <person name="Vallenet D."/>
            <person name="Yu D.S."/>
            <person name="Choi S.H."/>
            <person name="Couloux A."/>
            <person name="Lee S.W."/>
            <person name="Yoon S.H."/>
            <person name="Cattolico L."/>
            <person name="Hur C.G."/>
            <person name="Park H.S."/>
            <person name="Segurens B."/>
            <person name="Kim S.C."/>
            <person name="Oh T.K."/>
            <person name="Lenski R.E."/>
            <person name="Studier F.W."/>
            <person name="Daegelen P."/>
            <person name="Kim J.F."/>
        </authorList>
    </citation>
    <scope>NUCLEOTIDE SEQUENCE [LARGE SCALE GENOMIC DNA]</scope>
    <source>
        <strain>B / REL606</strain>
    </source>
</reference>
<gene>
    <name evidence="1" type="primary">nuoK</name>
    <name type="ordered locus">ECB_02204</name>
</gene>
<protein>
    <recommendedName>
        <fullName evidence="1">NADH-quinone oxidoreductase subunit K</fullName>
        <ecNumber evidence="1">7.1.1.-</ecNumber>
    </recommendedName>
    <alternativeName>
        <fullName evidence="1">NADH dehydrogenase I subunit K</fullName>
    </alternativeName>
    <alternativeName>
        <fullName evidence="1">NDH-1 subunit K</fullName>
    </alternativeName>
</protein>
<name>NUOK_ECOBR</name>
<evidence type="ECO:0000255" key="1">
    <source>
        <dbReference type="HAMAP-Rule" id="MF_01456"/>
    </source>
</evidence>
<comment type="function">
    <text evidence="1">NDH-1 shuttles electrons from NADH, via FMN and iron-sulfur (Fe-S) centers, to quinones in the respiratory chain. The immediate electron acceptor for the enzyme in this species is believed to be ubiquinone. Couples the redox reaction to proton translocation (for every two electrons transferred, four hydrogen ions are translocated across the cytoplasmic membrane), and thus conserves the redox energy in a proton gradient.</text>
</comment>
<comment type="catalytic activity">
    <reaction evidence="1">
        <text>a quinone + NADH + 5 H(+)(in) = a quinol + NAD(+) + 4 H(+)(out)</text>
        <dbReference type="Rhea" id="RHEA:57888"/>
        <dbReference type="ChEBI" id="CHEBI:15378"/>
        <dbReference type="ChEBI" id="CHEBI:24646"/>
        <dbReference type="ChEBI" id="CHEBI:57540"/>
        <dbReference type="ChEBI" id="CHEBI:57945"/>
        <dbReference type="ChEBI" id="CHEBI:132124"/>
    </reaction>
</comment>
<comment type="subunit">
    <text evidence="1">NDH-1 is composed of 13 different subunits. Subunits NuoA, H, J, K, L, M, N constitute the membrane sector of the complex.</text>
</comment>
<comment type="subcellular location">
    <subcellularLocation>
        <location evidence="1">Cell inner membrane</location>
        <topology evidence="1">Multi-pass membrane protein</topology>
    </subcellularLocation>
</comment>
<comment type="similarity">
    <text evidence="1">Belongs to the complex I subunit 4L family.</text>
</comment>
<organism>
    <name type="scientific">Escherichia coli (strain B / REL606)</name>
    <dbReference type="NCBI Taxonomy" id="413997"/>
    <lineage>
        <taxon>Bacteria</taxon>
        <taxon>Pseudomonadati</taxon>
        <taxon>Pseudomonadota</taxon>
        <taxon>Gammaproteobacteria</taxon>
        <taxon>Enterobacterales</taxon>
        <taxon>Enterobacteriaceae</taxon>
        <taxon>Escherichia</taxon>
    </lineage>
</organism>
<accession>C6ULT8</accession>
<sequence>MIPLQHGLILAAILFVLGLTGLVIRRNLLFMLIGLEIMINASALAFVVAGSYWGQTDGQVMYILAISLAAAEASIGLALLLQLHRRRQNLNIDSVSEMRG</sequence>
<proteinExistence type="inferred from homology"/>